<sequence length="101" mass="10939">MLSLAHYLVLGAVLFAISIVGIFLNRKNVIVLLMAIELMLLAVNMNFVAFSHYLGDLAGQVFVFFILTVAAAESAIGLAILVVLFRNLDTINVDDLDSLKG</sequence>
<feature type="chain" id="PRO_0000390186" description="NADH-quinone oxidoreductase subunit K">
    <location>
        <begin position="1"/>
        <end position="101"/>
    </location>
</feature>
<feature type="transmembrane region" description="Helical" evidence="1">
    <location>
        <begin position="4"/>
        <end position="24"/>
    </location>
</feature>
<feature type="transmembrane region" description="Helical" evidence="1">
    <location>
        <begin position="30"/>
        <end position="50"/>
    </location>
</feature>
<feature type="transmembrane region" description="Helical" evidence="1">
    <location>
        <begin position="61"/>
        <end position="81"/>
    </location>
</feature>
<comment type="function">
    <text evidence="1">NDH-1 shuttles electrons from NADH, via FMN and iron-sulfur (Fe-S) centers, to quinones in the respiratory chain. The immediate electron acceptor for the enzyme in this species is believed to be ubiquinone. Couples the redox reaction to proton translocation (for every two electrons transferred, four hydrogen ions are translocated across the cytoplasmic membrane), and thus conserves the redox energy in a proton gradient.</text>
</comment>
<comment type="catalytic activity">
    <reaction evidence="1">
        <text>a quinone + NADH + 5 H(+)(in) = a quinol + NAD(+) + 4 H(+)(out)</text>
        <dbReference type="Rhea" id="RHEA:57888"/>
        <dbReference type="ChEBI" id="CHEBI:15378"/>
        <dbReference type="ChEBI" id="CHEBI:24646"/>
        <dbReference type="ChEBI" id="CHEBI:57540"/>
        <dbReference type="ChEBI" id="CHEBI:57945"/>
        <dbReference type="ChEBI" id="CHEBI:132124"/>
    </reaction>
</comment>
<comment type="subunit">
    <text evidence="1">NDH-1 is composed of 14 different subunits. Subunits NuoA, H, J, K, L, M, N constitute the membrane sector of the complex.</text>
</comment>
<comment type="subcellular location">
    <subcellularLocation>
        <location evidence="1">Cell inner membrane</location>
        <topology evidence="1">Multi-pass membrane protein</topology>
    </subcellularLocation>
</comment>
<comment type="similarity">
    <text evidence="1">Belongs to the complex I subunit 4L family.</text>
</comment>
<evidence type="ECO:0000255" key="1">
    <source>
        <dbReference type="HAMAP-Rule" id="MF_01456"/>
    </source>
</evidence>
<reference key="1">
    <citation type="journal article" date="2002" name="Nature">
        <title>Genome sequence of the plant pathogen Ralstonia solanacearum.</title>
        <authorList>
            <person name="Salanoubat M."/>
            <person name="Genin S."/>
            <person name="Artiguenave F."/>
            <person name="Gouzy J."/>
            <person name="Mangenot S."/>
            <person name="Arlat M."/>
            <person name="Billault A."/>
            <person name="Brottier P."/>
            <person name="Camus J.-C."/>
            <person name="Cattolico L."/>
            <person name="Chandler M."/>
            <person name="Choisne N."/>
            <person name="Claudel-Renard C."/>
            <person name="Cunnac S."/>
            <person name="Demange N."/>
            <person name="Gaspin C."/>
            <person name="Lavie M."/>
            <person name="Moisan A."/>
            <person name="Robert C."/>
            <person name="Saurin W."/>
            <person name="Schiex T."/>
            <person name="Siguier P."/>
            <person name="Thebault P."/>
            <person name="Whalen M."/>
            <person name="Wincker P."/>
            <person name="Levy M."/>
            <person name="Weissenbach J."/>
            <person name="Boucher C.A."/>
        </authorList>
    </citation>
    <scope>NUCLEOTIDE SEQUENCE [LARGE SCALE GENOMIC DNA]</scope>
    <source>
        <strain>ATCC BAA-1114 / GMI1000</strain>
    </source>
</reference>
<gene>
    <name evidence="1" type="primary">nuoK</name>
    <name type="ordered locus">RSc2052</name>
</gene>
<keyword id="KW-0997">Cell inner membrane</keyword>
<keyword id="KW-1003">Cell membrane</keyword>
<keyword id="KW-0472">Membrane</keyword>
<keyword id="KW-0520">NAD</keyword>
<keyword id="KW-0874">Quinone</keyword>
<keyword id="KW-1185">Reference proteome</keyword>
<keyword id="KW-1278">Translocase</keyword>
<keyword id="KW-0812">Transmembrane</keyword>
<keyword id="KW-1133">Transmembrane helix</keyword>
<keyword id="KW-0813">Transport</keyword>
<keyword id="KW-0830">Ubiquinone</keyword>
<dbReference type="EC" id="7.1.1.-" evidence="1"/>
<dbReference type="EMBL" id="AL646052">
    <property type="protein sequence ID" value="CAD15759.1"/>
    <property type="molecule type" value="Genomic_DNA"/>
</dbReference>
<dbReference type="RefSeq" id="WP_003261941.1">
    <property type="nucleotide sequence ID" value="NC_003295.1"/>
</dbReference>
<dbReference type="SMR" id="Q8XXR1"/>
<dbReference type="STRING" id="267608.RSc2052"/>
<dbReference type="EnsemblBacteria" id="CAD15759">
    <property type="protein sequence ID" value="CAD15759"/>
    <property type="gene ID" value="RSc2052"/>
</dbReference>
<dbReference type="GeneID" id="97320719"/>
<dbReference type="KEGG" id="rso:RSc2052"/>
<dbReference type="eggNOG" id="COG0713">
    <property type="taxonomic scope" value="Bacteria"/>
</dbReference>
<dbReference type="HOGENOM" id="CLU_144724_2_0_4"/>
<dbReference type="Proteomes" id="UP000001436">
    <property type="component" value="Chromosome"/>
</dbReference>
<dbReference type="GO" id="GO:0030964">
    <property type="term" value="C:NADH dehydrogenase complex"/>
    <property type="evidence" value="ECO:0007669"/>
    <property type="project" value="TreeGrafter"/>
</dbReference>
<dbReference type="GO" id="GO:0005886">
    <property type="term" value="C:plasma membrane"/>
    <property type="evidence" value="ECO:0007669"/>
    <property type="project" value="UniProtKB-SubCell"/>
</dbReference>
<dbReference type="GO" id="GO:0050136">
    <property type="term" value="F:NADH:ubiquinone reductase (non-electrogenic) activity"/>
    <property type="evidence" value="ECO:0007669"/>
    <property type="project" value="UniProtKB-UniRule"/>
</dbReference>
<dbReference type="GO" id="GO:0048038">
    <property type="term" value="F:quinone binding"/>
    <property type="evidence" value="ECO:0007669"/>
    <property type="project" value="UniProtKB-KW"/>
</dbReference>
<dbReference type="GO" id="GO:0042773">
    <property type="term" value="P:ATP synthesis coupled electron transport"/>
    <property type="evidence" value="ECO:0007669"/>
    <property type="project" value="InterPro"/>
</dbReference>
<dbReference type="FunFam" id="1.10.287.3510:FF:000001">
    <property type="entry name" value="NADH-quinone oxidoreductase subunit K"/>
    <property type="match status" value="1"/>
</dbReference>
<dbReference type="Gene3D" id="1.10.287.3510">
    <property type="match status" value="1"/>
</dbReference>
<dbReference type="HAMAP" id="MF_01456">
    <property type="entry name" value="NDH1_NuoK"/>
    <property type="match status" value="1"/>
</dbReference>
<dbReference type="InterPro" id="IPR001133">
    <property type="entry name" value="NADH_UbQ_OxRdtase_chain4L/K"/>
</dbReference>
<dbReference type="InterPro" id="IPR039428">
    <property type="entry name" value="NUOK/Mnh_C1-like"/>
</dbReference>
<dbReference type="NCBIfam" id="NF004320">
    <property type="entry name" value="PRK05715.1-2"/>
    <property type="match status" value="1"/>
</dbReference>
<dbReference type="NCBIfam" id="NF004321">
    <property type="entry name" value="PRK05715.1-3"/>
    <property type="match status" value="1"/>
</dbReference>
<dbReference type="NCBIfam" id="NF004323">
    <property type="entry name" value="PRK05715.1-5"/>
    <property type="match status" value="1"/>
</dbReference>
<dbReference type="PANTHER" id="PTHR11434:SF21">
    <property type="entry name" value="NADH DEHYDROGENASE SUBUNIT 4L-RELATED"/>
    <property type="match status" value="1"/>
</dbReference>
<dbReference type="PANTHER" id="PTHR11434">
    <property type="entry name" value="NADH-UBIQUINONE OXIDOREDUCTASE SUBUNIT ND4L"/>
    <property type="match status" value="1"/>
</dbReference>
<dbReference type="Pfam" id="PF00420">
    <property type="entry name" value="Oxidored_q2"/>
    <property type="match status" value="1"/>
</dbReference>
<accession>Q8XXR1</accession>
<organism>
    <name type="scientific">Ralstonia nicotianae (strain ATCC BAA-1114 / GMI1000)</name>
    <name type="common">Ralstonia solanacearum</name>
    <dbReference type="NCBI Taxonomy" id="267608"/>
    <lineage>
        <taxon>Bacteria</taxon>
        <taxon>Pseudomonadati</taxon>
        <taxon>Pseudomonadota</taxon>
        <taxon>Betaproteobacteria</taxon>
        <taxon>Burkholderiales</taxon>
        <taxon>Burkholderiaceae</taxon>
        <taxon>Ralstonia</taxon>
        <taxon>Ralstonia solanacearum species complex</taxon>
    </lineage>
</organism>
<proteinExistence type="inferred from homology"/>
<name>NUOK_RALN1</name>
<protein>
    <recommendedName>
        <fullName evidence="1">NADH-quinone oxidoreductase subunit K</fullName>
        <ecNumber evidence="1">7.1.1.-</ecNumber>
    </recommendedName>
    <alternativeName>
        <fullName evidence="1">NADH dehydrogenase I subunit K</fullName>
    </alternativeName>
    <alternativeName>
        <fullName evidence="1">NDH-1 subunit K</fullName>
    </alternativeName>
</protein>